<keyword id="KW-0663">Pyridoxal phosphate</keyword>
<keyword id="KW-1185">Reference proteome</keyword>
<reference key="1">
    <citation type="journal article" date="2003" name="Proc. Natl. Acad. Sci. U.S.A.">
        <title>Reductive genome evolution in Buchnera aphidicola.</title>
        <authorList>
            <person name="van Ham R.C.H.J."/>
            <person name="Kamerbeek J."/>
            <person name="Palacios C."/>
            <person name="Rausell C."/>
            <person name="Abascal F."/>
            <person name="Bastolla U."/>
            <person name="Fernandez J.M."/>
            <person name="Jimenez L."/>
            <person name="Postigo M."/>
            <person name="Silva F.J."/>
            <person name="Tamames J."/>
            <person name="Viguera E."/>
            <person name="Latorre A."/>
            <person name="Valencia A."/>
            <person name="Moran F."/>
            <person name="Moya A."/>
        </authorList>
    </citation>
    <scope>NUCLEOTIDE SEQUENCE [LARGE SCALE GENOMIC DNA]</scope>
    <source>
        <strain>Bp</strain>
    </source>
</reference>
<organism>
    <name type="scientific">Buchnera aphidicola subsp. Baizongia pistaciae (strain Bp)</name>
    <dbReference type="NCBI Taxonomy" id="224915"/>
    <lineage>
        <taxon>Bacteria</taxon>
        <taxon>Pseudomonadati</taxon>
        <taxon>Pseudomonadota</taxon>
        <taxon>Gammaproteobacteria</taxon>
        <taxon>Enterobacterales</taxon>
        <taxon>Erwiniaceae</taxon>
        <taxon>Buchnera</taxon>
    </lineage>
</organism>
<feature type="chain" id="PRO_0000163193" description="Pyridoxal phosphate homeostasis protein">
    <location>
        <begin position="1"/>
        <end position="223"/>
    </location>
</feature>
<feature type="modified residue" description="N6-(pyridoxal phosphate)lysine" evidence="1">
    <location>
        <position position="36"/>
    </location>
</feature>
<sequence>MKNIQKNIKKLKQKITNISKKFKINTQKIKLLAVSKNRSVNDIKKAILCGQNSFGENYVQESQPKIKLFNNIEWHYIGQIQSNKAHIIAKNFSWCHTITNKKTAVLLNKYRPYSLPKLNTLIQINIRDNTINIDDDIETIKQLAKTINSLDNLNLRGIMAMPYFKNTYLEQIQSYKYIHLYFDILKKKYTYIDTVSLGTSHDIQAALYSGSTLLRIGSSIFDV</sequence>
<evidence type="ECO:0000255" key="1">
    <source>
        <dbReference type="HAMAP-Rule" id="MF_02087"/>
    </source>
</evidence>
<accession>Q89A48</accession>
<proteinExistence type="inferred from homology"/>
<name>PLPHP_BUCBP</name>
<protein>
    <recommendedName>
        <fullName evidence="1">Pyridoxal phosphate homeostasis protein</fullName>
        <shortName evidence="1">PLP homeostasis protein</shortName>
    </recommendedName>
</protein>
<comment type="function">
    <text evidence="1">Pyridoxal 5'-phosphate (PLP)-binding protein, which is involved in PLP homeostasis.</text>
</comment>
<comment type="subunit">
    <text evidence="1">Monomer.</text>
</comment>
<comment type="similarity">
    <text evidence="1">Belongs to the pyridoxal phosphate-binding protein YggS/PROSC family.</text>
</comment>
<dbReference type="EMBL" id="AE016826">
    <property type="protein sequence ID" value="AAO27202.1"/>
    <property type="molecule type" value="Genomic_DNA"/>
</dbReference>
<dbReference type="RefSeq" id="WP_011091603.1">
    <property type="nucleotide sequence ID" value="NC_004545.1"/>
</dbReference>
<dbReference type="SMR" id="Q89A48"/>
<dbReference type="STRING" id="224915.bbp_497"/>
<dbReference type="KEGG" id="bab:bbp_497"/>
<dbReference type="eggNOG" id="COG0325">
    <property type="taxonomic scope" value="Bacteria"/>
</dbReference>
<dbReference type="HOGENOM" id="CLU_059988_0_1_6"/>
<dbReference type="OrthoDB" id="9804072at2"/>
<dbReference type="Proteomes" id="UP000000601">
    <property type="component" value="Chromosome"/>
</dbReference>
<dbReference type="GO" id="GO:0030170">
    <property type="term" value="F:pyridoxal phosphate binding"/>
    <property type="evidence" value="ECO:0007669"/>
    <property type="project" value="UniProtKB-UniRule"/>
</dbReference>
<dbReference type="CDD" id="cd06824">
    <property type="entry name" value="PLPDE_III_Yggs_like"/>
    <property type="match status" value="1"/>
</dbReference>
<dbReference type="Gene3D" id="3.20.20.10">
    <property type="entry name" value="Alanine racemase"/>
    <property type="match status" value="1"/>
</dbReference>
<dbReference type="HAMAP" id="MF_02087">
    <property type="entry name" value="PLP_homeostasis"/>
    <property type="match status" value="1"/>
</dbReference>
<dbReference type="InterPro" id="IPR001608">
    <property type="entry name" value="Ala_racemase_N"/>
</dbReference>
<dbReference type="InterPro" id="IPR029066">
    <property type="entry name" value="PLP-binding_barrel"/>
</dbReference>
<dbReference type="InterPro" id="IPR011078">
    <property type="entry name" value="PyrdxlP_homeostasis"/>
</dbReference>
<dbReference type="NCBIfam" id="TIGR00044">
    <property type="entry name" value="YggS family pyridoxal phosphate-dependent enzyme"/>
    <property type="match status" value="1"/>
</dbReference>
<dbReference type="PANTHER" id="PTHR10146">
    <property type="entry name" value="PROLINE SYNTHETASE CO-TRANSCRIBED BACTERIAL HOMOLOG PROTEIN"/>
    <property type="match status" value="1"/>
</dbReference>
<dbReference type="PANTHER" id="PTHR10146:SF14">
    <property type="entry name" value="PYRIDOXAL PHOSPHATE HOMEOSTASIS PROTEIN"/>
    <property type="match status" value="1"/>
</dbReference>
<dbReference type="Pfam" id="PF01168">
    <property type="entry name" value="Ala_racemase_N"/>
    <property type="match status" value="1"/>
</dbReference>
<dbReference type="PIRSF" id="PIRSF004848">
    <property type="entry name" value="YBL036c_PLPDEIII"/>
    <property type="match status" value="1"/>
</dbReference>
<dbReference type="SUPFAM" id="SSF51419">
    <property type="entry name" value="PLP-binding barrel"/>
    <property type="match status" value="1"/>
</dbReference>
<gene>
    <name type="ordered locus">bbp_497</name>
</gene>